<evidence type="ECO:0000255" key="1">
    <source>
        <dbReference type="HAMAP-Rule" id="MF_01495"/>
    </source>
</evidence>
<proteinExistence type="inferred from homology"/>
<name>PSBB_ACOCL</name>
<feature type="chain" id="PRO_0000359790" description="Photosystem II CP47 reaction center protein">
    <location>
        <begin position="1"/>
        <end position="508"/>
    </location>
</feature>
<feature type="transmembrane region" description="Helical" evidence="1">
    <location>
        <begin position="21"/>
        <end position="36"/>
    </location>
</feature>
<feature type="transmembrane region" description="Helical" evidence="1">
    <location>
        <begin position="101"/>
        <end position="115"/>
    </location>
</feature>
<feature type="transmembrane region" description="Helical" evidence="1">
    <location>
        <begin position="140"/>
        <end position="156"/>
    </location>
</feature>
<feature type="transmembrane region" description="Helical" evidence="1">
    <location>
        <begin position="203"/>
        <end position="218"/>
    </location>
</feature>
<feature type="transmembrane region" description="Helical" evidence="1">
    <location>
        <begin position="237"/>
        <end position="252"/>
    </location>
</feature>
<feature type="transmembrane region" description="Helical" evidence="1">
    <location>
        <begin position="457"/>
        <end position="472"/>
    </location>
</feature>
<comment type="function">
    <text evidence="1">One of the components of the core complex of photosystem II (PSII). It binds chlorophyll and helps catalyze the primary light-induced photochemical processes of PSII. PSII is a light-driven water:plastoquinone oxidoreductase, using light energy to abstract electrons from H(2)O, generating O(2) and a proton gradient subsequently used for ATP formation.</text>
</comment>
<comment type="cofactor">
    <text evidence="1">Binds multiple chlorophylls. PSII binds additional chlorophylls, carotenoids and specific lipids.</text>
</comment>
<comment type="subunit">
    <text evidence="1">PSII is composed of 1 copy each of membrane proteins PsbA, PsbB, PsbC, PsbD, PsbE, PsbF, PsbH, PsbI, PsbJ, PsbK, PsbL, PsbM, PsbT, PsbX, PsbY, PsbZ, Psb30/Ycf12, at least 3 peripheral proteins of the oxygen-evolving complex and a large number of cofactors. It forms dimeric complexes.</text>
</comment>
<comment type="subcellular location">
    <subcellularLocation>
        <location evidence="1">Plastid</location>
        <location evidence="1">Chloroplast thylakoid membrane</location>
        <topology evidence="1">Multi-pass membrane protein</topology>
    </subcellularLocation>
</comment>
<comment type="similarity">
    <text evidence="1">Belongs to the PsbB/PsbC family. PsbB subfamily.</text>
</comment>
<reference key="1">
    <citation type="journal article" date="2005" name="Mol. Biol. Evol.">
        <title>Analysis of Acorus calamus chloroplast genome and its phylogenetic implications.</title>
        <authorList>
            <person name="Goremykin V.V."/>
            <person name="Holland B."/>
            <person name="Hirsch-Ernst K.I."/>
            <person name="Hellwig F.H."/>
        </authorList>
    </citation>
    <scope>NUCLEOTIDE SEQUENCE [LARGE SCALE GENOMIC DNA]</scope>
</reference>
<gene>
    <name evidence="1" type="primary">psbB</name>
</gene>
<organism>
    <name type="scientific">Acorus calamus</name>
    <name type="common">Sweet flag</name>
    <dbReference type="NCBI Taxonomy" id="4465"/>
    <lineage>
        <taxon>Eukaryota</taxon>
        <taxon>Viridiplantae</taxon>
        <taxon>Streptophyta</taxon>
        <taxon>Embryophyta</taxon>
        <taxon>Tracheophyta</taxon>
        <taxon>Spermatophyta</taxon>
        <taxon>Magnoliopsida</taxon>
        <taxon>Liliopsida</taxon>
        <taxon>Acoraceae</taxon>
        <taxon>Acorus</taxon>
    </lineage>
</organism>
<keyword id="KW-0148">Chlorophyll</keyword>
<keyword id="KW-0150">Chloroplast</keyword>
<keyword id="KW-0157">Chromophore</keyword>
<keyword id="KW-0472">Membrane</keyword>
<keyword id="KW-0602">Photosynthesis</keyword>
<keyword id="KW-0604">Photosystem II</keyword>
<keyword id="KW-0934">Plastid</keyword>
<keyword id="KW-0793">Thylakoid</keyword>
<keyword id="KW-0812">Transmembrane</keyword>
<keyword id="KW-1133">Transmembrane helix</keyword>
<sequence length="508" mass="55998">MGLPWYRVHTVVLNDPGRLLSVHIMHTALVAGWAGSMALYELAVFDPSDPVLDPMWRQGMFVIPFMTRLGITNSWGGWSITGGTITNPGIWSYEGVAGAHIVFSGLCFLAAIWHWVYWDLEIFCDERTGKPSLDLPKIFGIHLFLSGVACFGFGAFHVTGLYGPGIWVSDPYGLTGKVQPVNPAWGAEGFDPFVPGGIASHHIAAGTLGILAGLFHLSVRPPQRLYKGLRMGNIETVLSSSIAAVFFAAFVVAGTMWYGSATTPIELFGPTRYQWDQGYFQQEIYRRVGAGLAENLSLSEAWSKIPEKLAFYDYIGNNPAKGGLFRAGSMDNGDGIAVGWLGHPVFRDKEGRELFVRRMPTFFETFPVVLVDGDGIVRADVPFRRAESKYSVEQVGVTVEFYGGELNGVSYSDPATVKKYARRAQLGEIFELDRATLKSDGVFRSSPRGWFTFGHASFALLFFFGHIWHGARTLFRDVFAGIDPDLDAQVEFGAFQKIGDPTTRRQAV</sequence>
<dbReference type="EMBL" id="AJ879453">
    <property type="protein sequence ID" value="CAI53820.1"/>
    <property type="molecule type" value="Genomic_DNA"/>
</dbReference>
<dbReference type="RefSeq" id="YP_319789.1">
    <property type="nucleotide sequence ID" value="NC_007407.1"/>
</dbReference>
<dbReference type="SMR" id="Q3V508"/>
<dbReference type="GeneID" id="3677463"/>
<dbReference type="GO" id="GO:0009535">
    <property type="term" value="C:chloroplast thylakoid membrane"/>
    <property type="evidence" value="ECO:0007669"/>
    <property type="project" value="UniProtKB-SubCell"/>
</dbReference>
<dbReference type="GO" id="GO:0009523">
    <property type="term" value="C:photosystem II"/>
    <property type="evidence" value="ECO:0007669"/>
    <property type="project" value="UniProtKB-KW"/>
</dbReference>
<dbReference type="GO" id="GO:0016168">
    <property type="term" value="F:chlorophyll binding"/>
    <property type="evidence" value="ECO:0007669"/>
    <property type="project" value="UniProtKB-UniRule"/>
</dbReference>
<dbReference type="GO" id="GO:0045156">
    <property type="term" value="F:electron transporter, transferring electrons within the cyclic electron transport pathway of photosynthesis activity"/>
    <property type="evidence" value="ECO:0007669"/>
    <property type="project" value="InterPro"/>
</dbReference>
<dbReference type="GO" id="GO:0009772">
    <property type="term" value="P:photosynthetic electron transport in photosystem II"/>
    <property type="evidence" value="ECO:0007669"/>
    <property type="project" value="InterPro"/>
</dbReference>
<dbReference type="FunFam" id="3.10.680.10:FF:000001">
    <property type="entry name" value="Photosystem II CP47 reaction center protein"/>
    <property type="match status" value="1"/>
</dbReference>
<dbReference type="Gene3D" id="3.10.680.10">
    <property type="entry name" value="Photosystem II CP47 reaction center protein"/>
    <property type="match status" value="1"/>
</dbReference>
<dbReference type="HAMAP" id="MF_01495">
    <property type="entry name" value="PSII_PsbB_CP47"/>
    <property type="match status" value="1"/>
</dbReference>
<dbReference type="InterPro" id="IPR000932">
    <property type="entry name" value="PS_antenna-like"/>
</dbReference>
<dbReference type="InterPro" id="IPR036001">
    <property type="entry name" value="PS_II_antenna-like_sf"/>
</dbReference>
<dbReference type="InterPro" id="IPR017486">
    <property type="entry name" value="PSII_PsbB"/>
</dbReference>
<dbReference type="NCBIfam" id="TIGR03039">
    <property type="entry name" value="PS_II_CP47"/>
    <property type="match status" value="1"/>
</dbReference>
<dbReference type="PANTHER" id="PTHR33180">
    <property type="entry name" value="PHOTOSYSTEM II CP43 REACTION CENTER PROTEIN"/>
    <property type="match status" value="1"/>
</dbReference>
<dbReference type="PANTHER" id="PTHR33180:SF35">
    <property type="entry name" value="PHOTOSYSTEM II CP47 REACTION CENTER PROTEIN"/>
    <property type="match status" value="1"/>
</dbReference>
<dbReference type="Pfam" id="PF00421">
    <property type="entry name" value="PSII"/>
    <property type="match status" value="1"/>
</dbReference>
<dbReference type="SUPFAM" id="SSF161077">
    <property type="entry name" value="Photosystem II antenna protein-like"/>
    <property type="match status" value="1"/>
</dbReference>
<accession>Q3V508</accession>
<geneLocation type="chloroplast"/>
<protein>
    <recommendedName>
        <fullName evidence="1">Photosystem II CP47 reaction center protein</fullName>
    </recommendedName>
    <alternativeName>
        <fullName evidence="1">PSII 47 kDa protein</fullName>
    </alternativeName>
    <alternativeName>
        <fullName evidence="1">Protein CP-47</fullName>
    </alternativeName>
</protein>